<feature type="chain" id="PRO_0000377754" description="Probable DNA-directed RNA polymerase II subunit RPB2 homolog">
    <location>
        <begin position="1"/>
        <end position="1140"/>
    </location>
</feature>
<feature type="zinc finger region" description="C4-type" evidence="2">
    <location>
        <begin position="1092"/>
        <end position="1108"/>
    </location>
</feature>
<feature type="binding site" evidence="1">
    <location>
        <position position="773"/>
    </location>
    <ligand>
        <name>Mg(2+)</name>
        <dbReference type="ChEBI" id="CHEBI:18420"/>
        <note>ligand shared with DNA-directed RNA polymerase largest subunit</note>
    </ligand>
</feature>
<feature type="binding site" evidence="1">
    <location>
        <position position="1092"/>
    </location>
    <ligand>
        <name>Zn(2+)</name>
        <dbReference type="ChEBI" id="CHEBI:29105"/>
    </ligand>
</feature>
<feature type="binding site" evidence="1">
    <location>
        <position position="1095"/>
    </location>
    <ligand>
        <name>Zn(2+)</name>
        <dbReference type="ChEBI" id="CHEBI:29105"/>
    </ligand>
</feature>
<feature type="binding site" evidence="1">
    <location>
        <position position="1105"/>
    </location>
    <ligand>
        <name>Zn(2+)</name>
        <dbReference type="ChEBI" id="CHEBI:29105"/>
    </ligand>
</feature>
<feature type="binding site" evidence="1">
    <location>
        <position position="1108"/>
    </location>
    <ligand>
        <name>Zn(2+)</name>
        <dbReference type="ChEBI" id="CHEBI:29105"/>
    </ligand>
</feature>
<organism>
    <name type="scientific">Invertebrate iridescent virus 3</name>
    <name type="common">IIV-3</name>
    <name type="synonym">Mosquito iridescent virus</name>
    <dbReference type="NCBI Taxonomy" id="345201"/>
    <lineage>
        <taxon>Viruses</taxon>
        <taxon>Varidnaviria</taxon>
        <taxon>Bamfordvirae</taxon>
        <taxon>Nucleocytoviricota</taxon>
        <taxon>Megaviricetes</taxon>
        <taxon>Pimascovirales</taxon>
        <taxon>Iridoviridae</taxon>
        <taxon>Betairidovirinae</taxon>
        <taxon>Chloriridovirus</taxon>
    </lineage>
</organism>
<gene>
    <name type="ORF">IIV3-009R</name>
</gene>
<accession>Q197F1</accession>
<organismHost>
    <name type="scientific">Aedes vexans</name>
    <name type="common">Inland floodwater mosquito</name>
    <name type="synonym">Culex vexans</name>
    <dbReference type="NCBI Taxonomy" id="7163"/>
</organismHost>
<organismHost>
    <name type="scientific">Culex territans</name>
    <dbReference type="NCBI Taxonomy" id="42431"/>
</organismHost>
<organismHost>
    <name type="scientific">Culiseta annulata</name>
    <dbReference type="NCBI Taxonomy" id="332058"/>
</organismHost>
<organismHost>
    <name type="scientific">Ochlerotatus sollicitans</name>
    <name type="common">eastern saltmarsh mosquito</name>
    <dbReference type="NCBI Taxonomy" id="310513"/>
</organismHost>
<organismHost>
    <name type="scientific">Ochlerotatus taeniorhynchus</name>
    <name type="common">Black salt marsh mosquito</name>
    <name type="synonym">Aedes taeniorhynchus</name>
    <dbReference type="NCBI Taxonomy" id="329105"/>
</organismHost>
<organismHost>
    <name type="scientific">Psorophora ferox</name>
    <dbReference type="NCBI Taxonomy" id="7183"/>
</organismHost>
<dbReference type="EC" id="2.7.7.6"/>
<dbReference type="EMBL" id="DQ643392">
    <property type="protein sequence ID" value="ABF82039.1"/>
    <property type="molecule type" value="Genomic_DNA"/>
</dbReference>
<dbReference type="RefSeq" id="YP_654581.1">
    <property type="nucleotide sequence ID" value="NC_008187.1"/>
</dbReference>
<dbReference type="SMR" id="Q197F1"/>
<dbReference type="KEGG" id="vg:4156258"/>
<dbReference type="Proteomes" id="UP000001358">
    <property type="component" value="Genome"/>
</dbReference>
<dbReference type="GO" id="GO:0000428">
    <property type="term" value="C:DNA-directed RNA polymerase complex"/>
    <property type="evidence" value="ECO:0007669"/>
    <property type="project" value="UniProtKB-KW"/>
</dbReference>
<dbReference type="GO" id="GO:0003677">
    <property type="term" value="F:DNA binding"/>
    <property type="evidence" value="ECO:0007669"/>
    <property type="project" value="InterPro"/>
</dbReference>
<dbReference type="GO" id="GO:0003899">
    <property type="term" value="F:DNA-directed RNA polymerase activity"/>
    <property type="evidence" value="ECO:0007669"/>
    <property type="project" value="UniProtKB-EC"/>
</dbReference>
<dbReference type="GO" id="GO:0032549">
    <property type="term" value="F:ribonucleoside binding"/>
    <property type="evidence" value="ECO:0007669"/>
    <property type="project" value="InterPro"/>
</dbReference>
<dbReference type="GO" id="GO:0008270">
    <property type="term" value="F:zinc ion binding"/>
    <property type="evidence" value="ECO:0007669"/>
    <property type="project" value="UniProtKB-KW"/>
</dbReference>
<dbReference type="GO" id="GO:0006351">
    <property type="term" value="P:DNA-templated transcription"/>
    <property type="evidence" value="ECO:0007669"/>
    <property type="project" value="InterPro"/>
</dbReference>
<dbReference type="CDD" id="cd00653">
    <property type="entry name" value="RNA_pol_B_RPB2"/>
    <property type="match status" value="1"/>
</dbReference>
<dbReference type="Gene3D" id="2.40.50.150">
    <property type="match status" value="1"/>
</dbReference>
<dbReference type="Gene3D" id="3.90.1100.10">
    <property type="match status" value="2"/>
</dbReference>
<dbReference type="Gene3D" id="2.40.270.10">
    <property type="entry name" value="DNA-directed RNA polymerase, subunit 2, domain 6"/>
    <property type="match status" value="1"/>
</dbReference>
<dbReference type="Gene3D" id="3.90.1800.10">
    <property type="entry name" value="RNA polymerase alpha subunit dimerisation domain"/>
    <property type="match status" value="1"/>
</dbReference>
<dbReference type="InterPro" id="IPR015712">
    <property type="entry name" value="DNA-dir_RNA_pol_su2"/>
</dbReference>
<dbReference type="InterPro" id="IPR007120">
    <property type="entry name" value="DNA-dir_RNAP_su2_dom"/>
</dbReference>
<dbReference type="InterPro" id="IPR037033">
    <property type="entry name" value="DNA-dir_RNAP_su2_hyb_sf"/>
</dbReference>
<dbReference type="InterPro" id="IPR007644">
    <property type="entry name" value="RNA_pol_bsu_protrusion"/>
</dbReference>
<dbReference type="InterPro" id="IPR007645">
    <property type="entry name" value="RNA_pol_Rpb2_3"/>
</dbReference>
<dbReference type="InterPro" id="IPR007641">
    <property type="entry name" value="RNA_pol_Rpb2_7"/>
</dbReference>
<dbReference type="InterPro" id="IPR014724">
    <property type="entry name" value="RNA_pol_RPB2_OB-fold"/>
</dbReference>
<dbReference type="PANTHER" id="PTHR20856">
    <property type="entry name" value="DNA-DIRECTED RNA POLYMERASE I SUBUNIT 2"/>
    <property type="match status" value="1"/>
</dbReference>
<dbReference type="Pfam" id="PF04563">
    <property type="entry name" value="RNA_pol_Rpb2_1"/>
    <property type="match status" value="1"/>
</dbReference>
<dbReference type="Pfam" id="PF04565">
    <property type="entry name" value="RNA_pol_Rpb2_3"/>
    <property type="match status" value="1"/>
</dbReference>
<dbReference type="Pfam" id="PF00562">
    <property type="entry name" value="RNA_pol_Rpb2_6"/>
    <property type="match status" value="1"/>
</dbReference>
<dbReference type="Pfam" id="PF04560">
    <property type="entry name" value="RNA_pol_Rpb2_7"/>
    <property type="match status" value="1"/>
</dbReference>
<dbReference type="SUPFAM" id="SSF64484">
    <property type="entry name" value="beta and beta-prime subunits of DNA dependent RNA-polymerase"/>
    <property type="match status" value="1"/>
</dbReference>
<proteinExistence type="inferred from homology"/>
<comment type="function">
    <text evidence="1">Component of the DNA-dependent RNA polymerase that catalyzes the transcription of DNA into RNA using the four ribonucleoside triphosphates as substrates. Second largest component of RNA polymerase II which synthesizes mRNA precursors and many functional non-coding RNAs. Proposed to contribute to the polymerase catalytic activity and forms the polymerase active center together with the largest subunit (By similarity).</text>
</comment>
<comment type="catalytic activity">
    <reaction>
        <text>RNA(n) + a ribonucleoside 5'-triphosphate = RNA(n+1) + diphosphate</text>
        <dbReference type="Rhea" id="RHEA:21248"/>
        <dbReference type="Rhea" id="RHEA-COMP:14527"/>
        <dbReference type="Rhea" id="RHEA-COMP:17342"/>
        <dbReference type="ChEBI" id="CHEBI:33019"/>
        <dbReference type="ChEBI" id="CHEBI:61557"/>
        <dbReference type="ChEBI" id="CHEBI:140395"/>
        <dbReference type="EC" id="2.7.7.6"/>
    </reaction>
</comment>
<comment type="similarity">
    <text evidence="3">Belongs to the RNA polymerase beta chain family.</text>
</comment>
<sequence>MNQLNQKTKLDKHLSSDNRAKIVADYFKTNGLVKHQIETFNHFISKGLKTIINNESSIKYQSHDNYSLKFTNIYVEYPSIIDDDRTIRDLYPQEARNKDLSYTGNVCVNVIEMVENKEGKPPQISEQYRVPIAKIPIMLGSDVCHLSKYTPLENEQINGHSQADQGGYFIINGKERVLISQVRKAYNKPVCFVKSTSQKEDVLICEMRSMCEETFHSTSVQVKMIKNKIMVSLKLKRKLIDIPVGIVFKCLGYNPDQMGSKFRSLFNLPPEYEKYIDAIKNDCLEEFAYGIAVSAADGDNSDSGGESGGEEEADQEEHIVKVFRNMSTSVDKDGGMAATGITIEDVQKSLDMDLFPHLGITSTRKQRVDLLAFMVKKYLLTLTRKIPVDNRDDYNHKRVETAGELYSFLFRLLYKKFQKTCITQIRNRKPDISNFLRTSGITTGILYSFSSGYWGVQRNTYIRTGVSQVVNPKVSLLANYSSLRRVVIPESKDGKEAKTSEIRQIHPSSSFLVCPVETPEGKGVGTVLNMAVFCQVTTGISTCEIMDQIDSFGVDLKCHCTIKDPNNCLLLLINGSPYGNGHANVIHRLNFLNDTNISIVVNRALGVIEIFSDAGRFIRPIFDLDKICNFEGEIVPSFKWFLDNQLIRYIDINEAAANSIAIELRDLSTNPNTRYNLMELDPCGMFGIVAGIIPFPDRTQSARNCFYSSMVKQAIGFVPCHNLKTETVSHTLNYPQKPLVTTSFAEYNQLNEYPNGINAIVAIACYTGYNQEDSIILNKSSIDRGLFGTITYNTFTAQEKKNGIIEERIEIPSNAIKIRDCNYGLVGPDGIVRLRQRVKKGDVLICKVTIKNKNQDEKLVDSSVIVQHGEEGYVDRIVDNVIDGCRIVKVVIGQMRTPEIGDKFCSGMAQKGTCGMIFPQEDMPFTASGMTPDIIINPNCIPSRMTINQIISTVMGKLYTVNPNPRFRNGNSFQENSNTILKELCHHLKLNGFDPSGSEVMYSGFTGERIQSTIFMGPTYYHRLKHMVKDKMHARSHGQVTTLHRQPNCGRSQGGGLRFGEMEKDCILVHGATQFLNERMFLNSDPFQIDVCKDCGMMSSTSKKCHHCGSINVKRCNIPYSCKNLLQELNGMGIKTKIDL</sequence>
<evidence type="ECO:0000250" key="1"/>
<evidence type="ECO:0000255" key="2"/>
<evidence type="ECO:0000305" key="3"/>
<name>RPB2_IIV3</name>
<reference key="1">
    <citation type="journal article" date="2006" name="J. Virol.">
        <title>Genome of invertebrate iridescent virus type 3 (mosquito iridescent virus).</title>
        <authorList>
            <person name="Delhon G."/>
            <person name="Tulman E.R."/>
            <person name="Afonso C.L."/>
            <person name="Lu Z."/>
            <person name="Becnel J.J."/>
            <person name="Moser B.A."/>
            <person name="Kutish G.F."/>
            <person name="Rock D.L."/>
        </authorList>
    </citation>
    <scope>NUCLEOTIDE SEQUENCE [LARGE SCALE GENOMIC DNA]</scope>
</reference>
<keyword id="KW-0240">DNA-directed RNA polymerase</keyword>
<keyword id="KW-0460">Magnesium</keyword>
<keyword id="KW-0479">Metal-binding</keyword>
<keyword id="KW-0548">Nucleotidyltransferase</keyword>
<keyword id="KW-1185">Reference proteome</keyword>
<keyword id="KW-0804">Transcription</keyword>
<keyword id="KW-0808">Transferase</keyword>
<keyword id="KW-0862">Zinc</keyword>
<keyword id="KW-0863">Zinc-finger</keyword>
<protein>
    <recommendedName>
        <fullName>Probable DNA-directed RNA polymerase II subunit RPB2 homolog</fullName>
        <ecNumber>2.7.7.6</ecNumber>
    </recommendedName>
</protein>